<gene>
    <name evidence="1" type="primary">hflD</name>
    <name type="ordered locus">PP_4015</name>
</gene>
<comment type="subcellular location">
    <subcellularLocation>
        <location>Cytoplasm</location>
    </subcellularLocation>
    <subcellularLocation>
        <location evidence="1">Cell inner membrane</location>
        <topology evidence="1">Peripheral membrane protein</topology>
        <orientation evidence="1">Cytoplasmic side</orientation>
    </subcellularLocation>
</comment>
<comment type="similarity">
    <text evidence="1">Belongs to the HflD family.</text>
</comment>
<reference key="1">
    <citation type="journal article" date="2002" name="Environ. Microbiol.">
        <title>Complete genome sequence and comparative analysis of the metabolically versatile Pseudomonas putida KT2440.</title>
        <authorList>
            <person name="Nelson K.E."/>
            <person name="Weinel C."/>
            <person name="Paulsen I.T."/>
            <person name="Dodson R.J."/>
            <person name="Hilbert H."/>
            <person name="Martins dos Santos V.A.P."/>
            <person name="Fouts D.E."/>
            <person name="Gill S.R."/>
            <person name="Pop M."/>
            <person name="Holmes M."/>
            <person name="Brinkac L.M."/>
            <person name="Beanan M.J."/>
            <person name="DeBoy R.T."/>
            <person name="Daugherty S.C."/>
            <person name="Kolonay J.F."/>
            <person name="Madupu R."/>
            <person name="Nelson W.C."/>
            <person name="White O."/>
            <person name="Peterson J.D."/>
            <person name="Khouri H.M."/>
            <person name="Hance I."/>
            <person name="Chris Lee P."/>
            <person name="Holtzapple E.K."/>
            <person name="Scanlan D."/>
            <person name="Tran K."/>
            <person name="Moazzez A."/>
            <person name="Utterback T.R."/>
            <person name="Rizzo M."/>
            <person name="Lee K."/>
            <person name="Kosack D."/>
            <person name="Moestl D."/>
            <person name="Wedler H."/>
            <person name="Lauber J."/>
            <person name="Stjepandic D."/>
            <person name="Hoheisel J."/>
            <person name="Straetz M."/>
            <person name="Heim S."/>
            <person name="Kiewitz C."/>
            <person name="Eisen J.A."/>
            <person name="Timmis K.N."/>
            <person name="Duesterhoeft A."/>
            <person name="Tuemmler B."/>
            <person name="Fraser C.M."/>
        </authorList>
    </citation>
    <scope>NUCLEOTIDE SEQUENCE [LARGE SCALE GENOMIC DNA]</scope>
    <source>
        <strain>ATCC 47054 / DSM 6125 / CFBP 8728 / NCIMB 11950 / KT2440</strain>
    </source>
</reference>
<protein>
    <recommendedName>
        <fullName evidence="1">High frequency lysogenization protein HflD homolog</fullName>
    </recommendedName>
</protein>
<name>HFLD_PSEPK</name>
<evidence type="ECO:0000255" key="1">
    <source>
        <dbReference type="HAMAP-Rule" id="MF_00695"/>
    </source>
</evidence>
<accession>Q88FR8</accession>
<sequence length="208" mass="23368">MSNLQEQLIALGGVFQAAVLVDRIARTGQASEANIGCMLGSLLVRDPKDTLEVFGGDDLNLRDGYRALIGALERDPNSLQREPLRYALSMLGLERQLNKRGDLLDTIGNRLPQIQSQAEHFGLVHENVIASSGALYQDTLSTLRQRIQVHGDMRFLQQPNNASKIRALLLAGIRAARLWRQLGGHRWQLVFSRRKLLNELYDMMRSPN</sequence>
<keyword id="KW-0997">Cell inner membrane</keyword>
<keyword id="KW-1003">Cell membrane</keyword>
<keyword id="KW-0963">Cytoplasm</keyword>
<keyword id="KW-0472">Membrane</keyword>
<keyword id="KW-1185">Reference proteome</keyword>
<organism>
    <name type="scientific">Pseudomonas putida (strain ATCC 47054 / DSM 6125 / CFBP 8728 / NCIMB 11950 / KT2440)</name>
    <dbReference type="NCBI Taxonomy" id="160488"/>
    <lineage>
        <taxon>Bacteria</taxon>
        <taxon>Pseudomonadati</taxon>
        <taxon>Pseudomonadota</taxon>
        <taxon>Gammaproteobacteria</taxon>
        <taxon>Pseudomonadales</taxon>
        <taxon>Pseudomonadaceae</taxon>
        <taxon>Pseudomonas</taxon>
    </lineage>
</organism>
<proteinExistence type="inferred from homology"/>
<feature type="chain" id="PRO_0000071584" description="High frequency lysogenization protein HflD homolog">
    <location>
        <begin position="1"/>
        <end position="208"/>
    </location>
</feature>
<dbReference type="EMBL" id="AE015451">
    <property type="protein sequence ID" value="AAN69609.1"/>
    <property type="molecule type" value="Genomic_DNA"/>
</dbReference>
<dbReference type="RefSeq" id="NP_746145.1">
    <property type="nucleotide sequence ID" value="NC_002947.4"/>
</dbReference>
<dbReference type="RefSeq" id="WP_010954818.1">
    <property type="nucleotide sequence ID" value="NZ_CP169744.1"/>
</dbReference>
<dbReference type="SMR" id="Q88FR8"/>
<dbReference type="STRING" id="160488.PP_4015"/>
<dbReference type="PaxDb" id="160488-PP_4015"/>
<dbReference type="GeneID" id="83679282"/>
<dbReference type="KEGG" id="ppu:PP_4015"/>
<dbReference type="PATRIC" id="fig|160488.4.peg.4271"/>
<dbReference type="eggNOG" id="COG2915">
    <property type="taxonomic scope" value="Bacteria"/>
</dbReference>
<dbReference type="HOGENOM" id="CLU_098920_0_0_6"/>
<dbReference type="OrthoDB" id="9788031at2"/>
<dbReference type="PhylomeDB" id="Q88FR8"/>
<dbReference type="BioCyc" id="PPUT160488:G1G01-4282-MONOMER"/>
<dbReference type="Proteomes" id="UP000000556">
    <property type="component" value="Chromosome"/>
</dbReference>
<dbReference type="GO" id="GO:0005737">
    <property type="term" value="C:cytoplasm"/>
    <property type="evidence" value="ECO:0007669"/>
    <property type="project" value="UniProtKB-SubCell"/>
</dbReference>
<dbReference type="GO" id="GO:0005886">
    <property type="term" value="C:plasma membrane"/>
    <property type="evidence" value="ECO:0007669"/>
    <property type="project" value="UniProtKB-SubCell"/>
</dbReference>
<dbReference type="Gene3D" id="1.10.3890.10">
    <property type="entry name" value="HflD-like"/>
    <property type="match status" value="1"/>
</dbReference>
<dbReference type="HAMAP" id="MF_00695">
    <property type="entry name" value="HflD_protein"/>
    <property type="match status" value="1"/>
</dbReference>
<dbReference type="InterPro" id="IPR007451">
    <property type="entry name" value="HflD"/>
</dbReference>
<dbReference type="InterPro" id="IPR035932">
    <property type="entry name" value="HflD-like_sf"/>
</dbReference>
<dbReference type="NCBIfam" id="NF001246">
    <property type="entry name" value="PRK00218.1-2"/>
    <property type="match status" value="1"/>
</dbReference>
<dbReference type="NCBIfam" id="NF001247">
    <property type="entry name" value="PRK00218.1-3"/>
    <property type="match status" value="1"/>
</dbReference>
<dbReference type="PANTHER" id="PTHR38100">
    <property type="entry name" value="HIGH FREQUENCY LYSOGENIZATION PROTEIN HFLD"/>
    <property type="match status" value="1"/>
</dbReference>
<dbReference type="PANTHER" id="PTHR38100:SF1">
    <property type="entry name" value="HIGH FREQUENCY LYSOGENIZATION PROTEIN HFLD"/>
    <property type="match status" value="1"/>
</dbReference>
<dbReference type="Pfam" id="PF04356">
    <property type="entry name" value="DUF489"/>
    <property type="match status" value="1"/>
</dbReference>
<dbReference type="SUPFAM" id="SSF101322">
    <property type="entry name" value="YcfC-like"/>
    <property type="match status" value="1"/>
</dbReference>